<sequence>MNPAACVGRFAPSPTGPLHLGSLVAAVASFLDARAAGGRWLVRMEDLDRPRCEPGAAGIILRQLEAYGLVWDGDVLVQSQRDHAYAAALDMLKAQGAAYPCACTRAQLVQAPRNREGEMLYPGTCRNGLPADTVARAWRVRAPDASIRLHDRIHGDLQQNLAREVGDFIVKRADGLFAYQLAVVVDDAFQGITHVVRGADLLWNTPRQIYLQGLLGVPTPTYAHVPLITNVAGQKLSKQTRAPALPERGRDATLAQALVTLGHPPPGELAGAAPAELLTWASTHWHIENVPTHPVVAKPAP</sequence>
<comment type="function">
    <text evidence="1">Catalyzes the tRNA-independent activation of glutamate in presence of ATP and the subsequent transfer of glutamate onto a tRNA(Asp). Glutamate is transferred on the 2-amino-5-(4,5-dihydroxy-2-cyclopenten-1-yl) moiety of the queuosine in the wobble position of the QUC anticodon.</text>
</comment>
<comment type="cofactor">
    <cofactor evidence="1">
        <name>Zn(2+)</name>
        <dbReference type="ChEBI" id="CHEBI:29105"/>
    </cofactor>
    <text evidence="1">Binds 1 zinc ion per subunit.</text>
</comment>
<comment type="similarity">
    <text evidence="1">Belongs to the class-I aminoacyl-tRNA synthetase family. GluQ subfamily.</text>
</comment>
<name>GLUQ_THIDA</name>
<feature type="chain" id="PRO_1000024370" description="Glutamyl-Q tRNA(Asp) synthetase">
    <location>
        <begin position="1"/>
        <end position="301"/>
    </location>
</feature>
<feature type="short sequence motif" description="'HIGH' region">
    <location>
        <begin position="12"/>
        <end position="22"/>
    </location>
</feature>
<feature type="short sequence motif" description="'KMSKS' region">
    <location>
        <begin position="235"/>
        <end position="239"/>
    </location>
</feature>
<feature type="binding site" evidence="1">
    <location>
        <begin position="9"/>
        <end position="13"/>
    </location>
    <ligand>
        <name>L-glutamate</name>
        <dbReference type="ChEBI" id="CHEBI:29985"/>
    </ligand>
</feature>
<feature type="binding site" evidence="1">
    <location>
        <position position="45"/>
    </location>
    <ligand>
        <name>L-glutamate</name>
        <dbReference type="ChEBI" id="CHEBI:29985"/>
    </ligand>
</feature>
<feature type="binding site" evidence="1">
    <location>
        <position position="101"/>
    </location>
    <ligand>
        <name>Zn(2+)</name>
        <dbReference type="ChEBI" id="CHEBI:29105"/>
    </ligand>
</feature>
<feature type="binding site" evidence="1">
    <location>
        <position position="103"/>
    </location>
    <ligand>
        <name>Zn(2+)</name>
        <dbReference type="ChEBI" id="CHEBI:29105"/>
    </ligand>
</feature>
<feature type="binding site" evidence="1">
    <location>
        <position position="121"/>
    </location>
    <ligand>
        <name>Zn(2+)</name>
        <dbReference type="ChEBI" id="CHEBI:29105"/>
    </ligand>
</feature>
<feature type="binding site" evidence="1">
    <location>
        <position position="125"/>
    </location>
    <ligand>
        <name>Zn(2+)</name>
        <dbReference type="ChEBI" id="CHEBI:29105"/>
    </ligand>
</feature>
<feature type="binding site" evidence="1">
    <location>
        <position position="179"/>
    </location>
    <ligand>
        <name>L-glutamate</name>
        <dbReference type="ChEBI" id="CHEBI:29985"/>
    </ligand>
</feature>
<feature type="binding site" evidence="1">
    <location>
        <position position="197"/>
    </location>
    <ligand>
        <name>L-glutamate</name>
        <dbReference type="ChEBI" id="CHEBI:29985"/>
    </ligand>
</feature>
<feature type="binding site" evidence="1">
    <location>
        <position position="238"/>
    </location>
    <ligand>
        <name>ATP</name>
        <dbReference type="ChEBI" id="CHEBI:30616"/>
    </ligand>
</feature>
<dbReference type="EC" id="6.1.1.-" evidence="1"/>
<dbReference type="EMBL" id="CP000116">
    <property type="protein sequence ID" value="AAZ98662.1"/>
    <property type="molecule type" value="Genomic_DNA"/>
</dbReference>
<dbReference type="RefSeq" id="WP_011313221.1">
    <property type="nucleotide sequence ID" value="NC_007404.1"/>
</dbReference>
<dbReference type="SMR" id="Q3SFE8"/>
<dbReference type="STRING" id="292415.Tbd_2709"/>
<dbReference type="KEGG" id="tbd:Tbd_2709"/>
<dbReference type="eggNOG" id="COG0008">
    <property type="taxonomic scope" value="Bacteria"/>
</dbReference>
<dbReference type="HOGENOM" id="CLU_015768_0_1_4"/>
<dbReference type="OrthoDB" id="9807503at2"/>
<dbReference type="Proteomes" id="UP000008291">
    <property type="component" value="Chromosome"/>
</dbReference>
<dbReference type="GO" id="GO:0005829">
    <property type="term" value="C:cytosol"/>
    <property type="evidence" value="ECO:0007669"/>
    <property type="project" value="TreeGrafter"/>
</dbReference>
<dbReference type="GO" id="GO:0005524">
    <property type="term" value="F:ATP binding"/>
    <property type="evidence" value="ECO:0007669"/>
    <property type="project" value="UniProtKB-KW"/>
</dbReference>
<dbReference type="GO" id="GO:0004818">
    <property type="term" value="F:glutamate-tRNA ligase activity"/>
    <property type="evidence" value="ECO:0007669"/>
    <property type="project" value="TreeGrafter"/>
</dbReference>
<dbReference type="GO" id="GO:0008270">
    <property type="term" value="F:zinc ion binding"/>
    <property type="evidence" value="ECO:0007669"/>
    <property type="project" value="UniProtKB-UniRule"/>
</dbReference>
<dbReference type="GO" id="GO:0006424">
    <property type="term" value="P:glutamyl-tRNA aminoacylation"/>
    <property type="evidence" value="ECO:0007669"/>
    <property type="project" value="InterPro"/>
</dbReference>
<dbReference type="GO" id="GO:0006400">
    <property type="term" value="P:tRNA modification"/>
    <property type="evidence" value="ECO:0007669"/>
    <property type="project" value="InterPro"/>
</dbReference>
<dbReference type="FunFam" id="3.40.50.620:FF:000093">
    <property type="entry name" value="Glutamyl-Q tRNA(Asp) synthetase"/>
    <property type="match status" value="1"/>
</dbReference>
<dbReference type="Gene3D" id="3.40.50.620">
    <property type="entry name" value="HUPs"/>
    <property type="match status" value="1"/>
</dbReference>
<dbReference type="HAMAP" id="MF_01428">
    <property type="entry name" value="Glu_Q_tRNA_synth"/>
    <property type="match status" value="1"/>
</dbReference>
<dbReference type="InterPro" id="IPR022380">
    <property type="entry name" value="Glu-Q_tRNA(Asp)_Synthase"/>
</dbReference>
<dbReference type="InterPro" id="IPR000924">
    <property type="entry name" value="Glu/Gln-tRNA-synth"/>
</dbReference>
<dbReference type="InterPro" id="IPR020058">
    <property type="entry name" value="Glu/Gln-tRNA-synth_Ib_cat-dom"/>
</dbReference>
<dbReference type="InterPro" id="IPR049940">
    <property type="entry name" value="GluQ/Sye"/>
</dbReference>
<dbReference type="InterPro" id="IPR014729">
    <property type="entry name" value="Rossmann-like_a/b/a_fold"/>
</dbReference>
<dbReference type="NCBIfam" id="NF004313">
    <property type="entry name" value="PRK05710.1-2"/>
    <property type="match status" value="1"/>
</dbReference>
<dbReference type="NCBIfam" id="NF004314">
    <property type="entry name" value="PRK05710.1-3"/>
    <property type="match status" value="1"/>
</dbReference>
<dbReference type="NCBIfam" id="NF004315">
    <property type="entry name" value="PRK05710.1-4"/>
    <property type="match status" value="1"/>
</dbReference>
<dbReference type="NCBIfam" id="TIGR03838">
    <property type="entry name" value="queuosine_YadB"/>
    <property type="match status" value="1"/>
</dbReference>
<dbReference type="PANTHER" id="PTHR43311">
    <property type="entry name" value="GLUTAMATE--TRNA LIGASE"/>
    <property type="match status" value="1"/>
</dbReference>
<dbReference type="PANTHER" id="PTHR43311:SF1">
    <property type="entry name" value="GLUTAMYL-Q TRNA(ASP) SYNTHETASE"/>
    <property type="match status" value="1"/>
</dbReference>
<dbReference type="Pfam" id="PF00749">
    <property type="entry name" value="tRNA-synt_1c"/>
    <property type="match status" value="1"/>
</dbReference>
<dbReference type="PRINTS" id="PR00987">
    <property type="entry name" value="TRNASYNTHGLU"/>
</dbReference>
<dbReference type="SUPFAM" id="SSF52374">
    <property type="entry name" value="Nucleotidylyl transferase"/>
    <property type="match status" value="1"/>
</dbReference>
<gene>
    <name evidence="1" type="primary">gluQ</name>
    <name type="ordered locus">Tbd_2709</name>
</gene>
<reference key="1">
    <citation type="journal article" date="2006" name="J. Bacteriol.">
        <title>The genome sequence of the obligately chemolithoautotrophic, facultatively anaerobic bacterium Thiobacillus denitrificans.</title>
        <authorList>
            <person name="Beller H.R."/>
            <person name="Chain P.S."/>
            <person name="Letain T.E."/>
            <person name="Chakicherla A."/>
            <person name="Larimer F.W."/>
            <person name="Richardson P.M."/>
            <person name="Coleman M.A."/>
            <person name="Wood A.P."/>
            <person name="Kelly D.P."/>
        </authorList>
    </citation>
    <scope>NUCLEOTIDE SEQUENCE [LARGE SCALE GENOMIC DNA]</scope>
    <source>
        <strain>ATCC 25259 / T1</strain>
    </source>
</reference>
<organism>
    <name type="scientific">Thiobacillus denitrificans (strain ATCC 25259 / T1)</name>
    <dbReference type="NCBI Taxonomy" id="292415"/>
    <lineage>
        <taxon>Bacteria</taxon>
        <taxon>Pseudomonadati</taxon>
        <taxon>Pseudomonadota</taxon>
        <taxon>Betaproteobacteria</taxon>
        <taxon>Nitrosomonadales</taxon>
        <taxon>Thiobacillaceae</taxon>
        <taxon>Thiobacillus</taxon>
    </lineage>
</organism>
<proteinExistence type="inferred from homology"/>
<keyword id="KW-0030">Aminoacyl-tRNA synthetase</keyword>
<keyword id="KW-0067">ATP-binding</keyword>
<keyword id="KW-0436">Ligase</keyword>
<keyword id="KW-0479">Metal-binding</keyword>
<keyword id="KW-0547">Nucleotide-binding</keyword>
<keyword id="KW-1185">Reference proteome</keyword>
<keyword id="KW-0862">Zinc</keyword>
<evidence type="ECO:0000255" key="1">
    <source>
        <dbReference type="HAMAP-Rule" id="MF_01428"/>
    </source>
</evidence>
<accession>Q3SFE8</accession>
<protein>
    <recommendedName>
        <fullName evidence="1">Glutamyl-Q tRNA(Asp) synthetase</fullName>
        <shortName evidence="1">Glu-Q-RSs</shortName>
        <ecNumber evidence="1">6.1.1.-</ecNumber>
    </recommendedName>
</protein>